<dbReference type="EC" id="6.3.2.8" evidence="1"/>
<dbReference type="EMBL" id="AE008922">
    <property type="protein sequence ID" value="AAM40041.1"/>
    <property type="molecule type" value="Genomic_DNA"/>
</dbReference>
<dbReference type="RefSeq" id="NP_636117.1">
    <property type="nucleotide sequence ID" value="NC_003902.1"/>
</dbReference>
<dbReference type="RefSeq" id="WP_011035963.1">
    <property type="nucleotide sequence ID" value="NC_003902.1"/>
</dbReference>
<dbReference type="SMR" id="Q8PCJ9"/>
<dbReference type="STRING" id="190485.XCC0726"/>
<dbReference type="EnsemblBacteria" id="AAM40041">
    <property type="protein sequence ID" value="AAM40041"/>
    <property type="gene ID" value="XCC0726"/>
</dbReference>
<dbReference type="GeneID" id="58014707"/>
<dbReference type="KEGG" id="xcc:XCC0726"/>
<dbReference type="PATRIC" id="fig|190485.4.peg.790"/>
<dbReference type="eggNOG" id="COG0773">
    <property type="taxonomic scope" value="Bacteria"/>
</dbReference>
<dbReference type="HOGENOM" id="CLU_028104_2_2_6"/>
<dbReference type="OrthoDB" id="9804126at2"/>
<dbReference type="UniPathway" id="UPA00219"/>
<dbReference type="Proteomes" id="UP000001010">
    <property type="component" value="Chromosome"/>
</dbReference>
<dbReference type="GO" id="GO:0005737">
    <property type="term" value="C:cytoplasm"/>
    <property type="evidence" value="ECO:0007669"/>
    <property type="project" value="UniProtKB-SubCell"/>
</dbReference>
<dbReference type="GO" id="GO:0005524">
    <property type="term" value="F:ATP binding"/>
    <property type="evidence" value="ECO:0007669"/>
    <property type="project" value="UniProtKB-UniRule"/>
</dbReference>
<dbReference type="GO" id="GO:0008763">
    <property type="term" value="F:UDP-N-acetylmuramate-L-alanine ligase activity"/>
    <property type="evidence" value="ECO:0007669"/>
    <property type="project" value="UniProtKB-UniRule"/>
</dbReference>
<dbReference type="GO" id="GO:0051301">
    <property type="term" value="P:cell division"/>
    <property type="evidence" value="ECO:0007669"/>
    <property type="project" value="UniProtKB-KW"/>
</dbReference>
<dbReference type="GO" id="GO:0071555">
    <property type="term" value="P:cell wall organization"/>
    <property type="evidence" value="ECO:0007669"/>
    <property type="project" value="UniProtKB-KW"/>
</dbReference>
<dbReference type="GO" id="GO:0009252">
    <property type="term" value="P:peptidoglycan biosynthetic process"/>
    <property type="evidence" value="ECO:0007669"/>
    <property type="project" value="UniProtKB-UniRule"/>
</dbReference>
<dbReference type="GO" id="GO:0008360">
    <property type="term" value="P:regulation of cell shape"/>
    <property type="evidence" value="ECO:0007669"/>
    <property type="project" value="UniProtKB-KW"/>
</dbReference>
<dbReference type="Gene3D" id="3.90.190.20">
    <property type="entry name" value="Mur ligase, C-terminal domain"/>
    <property type="match status" value="1"/>
</dbReference>
<dbReference type="Gene3D" id="3.40.1190.10">
    <property type="entry name" value="Mur-like, catalytic domain"/>
    <property type="match status" value="1"/>
</dbReference>
<dbReference type="Gene3D" id="3.40.50.720">
    <property type="entry name" value="NAD(P)-binding Rossmann-like Domain"/>
    <property type="match status" value="1"/>
</dbReference>
<dbReference type="HAMAP" id="MF_00046">
    <property type="entry name" value="MurC"/>
    <property type="match status" value="1"/>
</dbReference>
<dbReference type="InterPro" id="IPR036565">
    <property type="entry name" value="Mur-like_cat_sf"/>
</dbReference>
<dbReference type="InterPro" id="IPR004101">
    <property type="entry name" value="Mur_ligase_C"/>
</dbReference>
<dbReference type="InterPro" id="IPR036615">
    <property type="entry name" value="Mur_ligase_C_dom_sf"/>
</dbReference>
<dbReference type="InterPro" id="IPR013221">
    <property type="entry name" value="Mur_ligase_cen"/>
</dbReference>
<dbReference type="InterPro" id="IPR000713">
    <property type="entry name" value="Mur_ligase_N"/>
</dbReference>
<dbReference type="InterPro" id="IPR050061">
    <property type="entry name" value="MurCDEF_pg_biosynth"/>
</dbReference>
<dbReference type="InterPro" id="IPR005758">
    <property type="entry name" value="UDP-N-AcMur_Ala_ligase_MurC"/>
</dbReference>
<dbReference type="NCBIfam" id="TIGR01082">
    <property type="entry name" value="murC"/>
    <property type="match status" value="1"/>
</dbReference>
<dbReference type="PANTHER" id="PTHR43445:SF3">
    <property type="entry name" value="UDP-N-ACETYLMURAMATE--L-ALANINE LIGASE"/>
    <property type="match status" value="1"/>
</dbReference>
<dbReference type="PANTHER" id="PTHR43445">
    <property type="entry name" value="UDP-N-ACETYLMURAMATE--L-ALANINE LIGASE-RELATED"/>
    <property type="match status" value="1"/>
</dbReference>
<dbReference type="Pfam" id="PF01225">
    <property type="entry name" value="Mur_ligase"/>
    <property type="match status" value="1"/>
</dbReference>
<dbReference type="Pfam" id="PF02875">
    <property type="entry name" value="Mur_ligase_C"/>
    <property type="match status" value="1"/>
</dbReference>
<dbReference type="Pfam" id="PF08245">
    <property type="entry name" value="Mur_ligase_M"/>
    <property type="match status" value="1"/>
</dbReference>
<dbReference type="SUPFAM" id="SSF51984">
    <property type="entry name" value="MurCD N-terminal domain"/>
    <property type="match status" value="1"/>
</dbReference>
<dbReference type="SUPFAM" id="SSF53623">
    <property type="entry name" value="MurD-like peptide ligases, catalytic domain"/>
    <property type="match status" value="1"/>
</dbReference>
<dbReference type="SUPFAM" id="SSF53244">
    <property type="entry name" value="MurD-like peptide ligases, peptide-binding domain"/>
    <property type="match status" value="1"/>
</dbReference>
<accession>Q8PCJ9</accession>
<proteinExistence type="inferred from homology"/>
<reference key="1">
    <citation type="journal article" date="2002" name="Nature">
        <title>Comparison of the genomes of two Xanthomonas pathogens with differing host specificities.</title>
        <authorList>
            <person name="da Silva A.C.R."/>
            <person name="Ferro J.A."/>
            <person name="Reinach F.C."/>
            <person name="Farah C.S."/>
            <person name="Furlan L.R."/>
            <person name="Quaggio R.B."/>
            <person name="Monteiro-Vitorello C.B."/>
            <person name="Van Sluys M.A."/>
            <person name="Almeida N.F. Jr."/>
            <person name="Alves L.M.C."/>
            <person name="do Amaral A.M."/>
            <person name="Bertolini M.C."/>
            <person name="Camargo L.E.A."/>
            <person name="Camarotte G."/>
            <person name="Cannavan F."/>
            <person name="Cardozo J."/>
            <person name="Chambergo F."/>
            <person name="Ciapina L.P."/>
            <person name="Cicarelli R.M.B."/>
            <person name="Coutinho L.L."/>
            <person name="Cursino-Santos J.R."/>
            <person name="El-Dorry H."/>
            <person name="Faria J.B."/>
            <person name="Ferreira A.J.S."/>
            <person name="Ferreira R.C.C."/>
            <person name="Ferro M.I.T."/>
            <person name="Formighieri E.F."/>
            <person name="Franco M.C."/>
            <person name="Greggio C.C."/>
            <person name="Gruber A."/>
            <person name="Katsuyama A.M."/>
            <person name="Kishi L.T."/>
            <person name="Leite R.P."/>
            <person name="Lemos E.G.M."/>
            <person name="Lemos M.V.F."/>
            <person name="Locali E.C."/>
            <person name="Machado M.A."/>
            <person name="Madeira A.M.B.N."/>
            <person name="Martinez-Rossi N.M."/>
            <person name="Martins E.C."/>
            <person name="Meidanis J."/>
            <person name="Menck C.F.M."/>
            <person name="Miyaki C.Y."/>
            <person name="Moon D.H."/>
            <person name="Moreira L.M."/>
            <person name="Novo M.T.M."/>
            <person name="Okura V.K."/>
            <person name="Oliveira M.C."/>
            <person name="Oliveira V.R."/>
            <person name="Pereira H.A."/>
            <person name="Rossi A."/>
            <person name="Sena J.A.D."/>
            <person name="Silva C."/>
            <person name="de Souza R.F."/>
            <person name="Spinola L.A.F."/>
            <person name="Takita M.A."/>
            <person name="Tamura R.E."/>
            <person name="Teixeira E.C."/>
            <person name="Tezza R.I.D."/>
            <person name="Trindade dos Santos M."/>
            <person name="Truffi D."/>
            <person name="Tsai S.M."/>
            <person name="White F.F."/>
            <person name="Setubal J.C."/>
            <person name="Kitajima J.P."/>
        </authorList>
    </citation>
    <scope>NUCLEOTIDE SEQUENCE [LARGE SCALE GENOMIC DNA]</scope>
    <source>
        <strain>ATCC 33913 / DSM 3586 / NCPPB 528 / LMG 568 / P 25</strain>
    </source>
</reference>
<organism>
    <name type="scientific">Xanthomonas campestris pv. campestris (strain ATCC 33913 / DSM 3586 / NCPPB 528 / LMG 568 / P 25)</name>
    <dbReference type="NCBI Taxonomy" id="190485"/>
    <lineage>
        <taxon>Bacteria</taxon>
        <taxon>Pseudomonadati</taxon>
        <taxon>Pseudomonadota</taxon>
        <taxon>Gammaproteobacteria</taxon>
        <taxon>Lysobacterales</taxon>
        <taxon>Lysobacteraceae</taxon>
        <taxon>Xanthomonas</taxon>
    </lineage>
</organism>
<sequence>MIRRLQDSGDLVRAFPRVHFVGIGGTGMSGIAEVMLTLGYEVSGSDNADNAATRRLAKLGARVMRGHSAANVLGTDCVVVSSAIREDNPELMEARSQRIPIMPRAAMLAELMRFRRGIAVAGTHGKTTTTSLAAAVLSEGGLDPTFVIGGQLLAAGANAKLGGGQWLVAEADESDGSFLRLNPLMAVITNIDADHLENYGNDFARVQAAFAEFLQRLPFYGLALLCIDDPEVAALAGKTPRHVMSYGMSENADVRAEDVVQDGPRMRFTLRLPEGTTTPVTLALPGRHNVLNALAAAAIGWQLGVAPDTIARALENFAGIGRRFNDLGEVTTASGARVRVVDDYGHHPRELEAVFAAARGGWPDKRLVVAFQPHRYSRTRDQFDAFAAVLSTVDALVLSEVYPAGEAPIPGADSRALARAIRARGRSEPVVVGQVAGLSEVLPDVLQDGDLLLMMGAGDIGYVAQQIVTDGFVGAPA</sequence>
<protein>
    <recommendedName>
        <fullName evidence="1">UDP-N-acetylmuramate--L-alanine ligase</fullName>
        <ecNumber evidence="1">6.3.2.8</ecNumber>
    </recommendedName>
    <alternativeName>
        <fullName evidence="1">UDP-N-acetylmuramoyl-L-alanine synthetase</fullName>
    </alternativeName>
</protein>
<comment type="function">
    <text evidence="1">Cell wall formation.</text>
</comment>
<comment type="catalytic activity">
    <reaction evidence="1">
        <text>UDP-N-acetyl-alpha-D-muramate + L-alanine + ATP = UDP-N-acetyl-alpha-D-muramoyl-L-alanine + ADP + phosphate + H(+)</text>
        <dbReference type="Rhea" id="RHEA:23372"/>
        <dbReference type="ChEBI" id="CHEBI:15378"/>
        <dbReference type="ChEBI" id="CHEBI:30616"/>
        <dbReference type="ChEBI" id="CHEBI:43474"/>
        <dbReference type="ChEBI" id="CHEBI:57972"/>
        <dbReference type="ChEBI" id="CHEBI:70757"/>
        <dbReference type="ChEBI" id="CHEBI:83898"/>
        <dbReference type="ChEBI" id="CHEBI:456216"/>
        <dbReference type="EC" id="6.3.2.8"/>
    </reaction>
</comment>
<comment type="pathway">
    <text evidence="1">Cell wall biogenesis; peptidoglycan biosynthesis.</text>
</comment>
<comment type="subcellular location">
    <subcellularLocation>
        <location evidence="1">Cytoplasm</location>
    </subcellularLocation>
</comment>
<comment type="similarity">
    <text evidence="1">Belongs to the MurCDEF family.</text>
</comment>
<name>MURC_XANCP</name>
<evidence type="ECO:0000255" key="1">
    <source>
        <dbReference type="HAMAP-Rule" id="MF_00046"/>
    </source>
</evidence>
<gene>
    <name evidence="1" type="primary">murC</name>
    <name type="ordered locus">XCC0726</name>
</gene>
<keyword id="KW-0067">ATP-binding</keyword>
<keyword id="KW-0131">Cell cycle</keyword>
<keyword id="KW-0132">Cell division</keyword>
<keyword id="KW-0133">Cell shape</keyword>
<keyword id="KW-0961">Cell wall biogenesis/degradation</keyword>
<keyword id="KW-0963">Cytoplasm</keyword>
<keyword id="KW-0436">Ligase</keyword>
<keyword id="KW-0547">Nucleotide-binding</keyword>
<keyword id="KW-0573">Peptidoglycan synthesis</keyword>
<keyword id="KW-1185">Reference proteome</keyword>
<feature type="chain" id="PRO_0000182187" description="UDP-N-acetylmuramate--L-alanine ligase">
    <location>
        <begin position="1"/>
        <end position="477"/>
    </location>
</feature>
<feature type="binding site" evidence="1">
    <location>
        <begin position="122"/>
        <end position="128"/>
    </location>
    <ligand>
        <name>ATP</name>
        <dbReference type="ChEBI" id="CHEBI:30616"/>
    </ligand>
</feature>